<protein>
    <recommendedName>
        <fullName>Threonine--tRNA ligase, mitochondrial</fullName>
        <ecNumber>6.1.1.3</ecNumber>
    </recommendedName>
    <alternativeName>
        <fullName>Threonyl-tRNA synthetase</fullName>
        <shortName>ThrRS</shortName>
    </alternativeName>
</protein>
<name>SYTM_YEAST</name>
<organism>
    <name type="scientific">Saccharomyces cerevisiae (strain ATCC 204508 / S288c)</name>
    <name type="common">Baker's yeast</name>
    <dbReference type="NCBI Taxonomy" id="559292"/>
    <lineage>
        <taxon>Eukaryota</taxon>
        <taxon>Fungi</taxon>
        <taxon>Dikarya</taxon>
        <taxon>Ascomycota</taxon>
        <taxon>Saccharomycotina</taxon>
        <taxon>Saccharomycetes</taxon>
        <taxon>Saccharomycetales</taxon>
        <taxon>Saccharomycetaceae</taxon>
        <taxon>Saccharomyces</taxon>
    </lineage>
</organism>
<feature type="transit peptide" description="Mitochondrion" evidence="1">
    <location>
        <begin position="1"/>
        <end position="45"/>
    </location>
</feature>
<feature type="chain" id="PRO_0000035827" description="Threonine--tRNA ligase, mitochondrial">
    <location>
        <begin position="46"/>
        <end position="462"/>
    </location>
</feature>
<feature type="sequence conflict" description="In Ref. 1; AAA34808." evidence="3" ref="1">
    <original>G</original>
    <variation>S</variation>
    <location>
        <position position="265"/>
    </location>
</feature>
<feature type="helix" evidence="5">
    <location>
        <begin position="35"/>
        <end position="46"/>
    </location>
</feature>
<feature type="helix" evidence="5">
    <location>
        <begin position="63"/>
        <end position="82"/>
    </location>
</feature>
<feature type="strand" evidence="5">
    <location>
        <begin position="93"/>
        <end position="96"/>
    </location>
</feature>
<feature type="helix" evidence="5">
    <location>
        <begin position="97"/>
        <end position="102"/>
    </location>
</feature>
<feature type="turn" evidence="5">
    <location>
        <begin position="106"/>
        <end position="108"/>
    </location>
</feature>
<feature type="helix" evidence="5">
    <location>
        <begin position="110"/>
        <end position="112"/>
    </location>
</feature>
<feature type="strand" evidence="4">
    <location>
        <begin position="113"/>
        <end position="117"/>
    </location>
</feature>
<feature type="strand" evidence="4">
    <location>
        <begin position="120"/>
        <end position="122"/>
    </location>
</feature>
<feature type="strand" evidence="5">
    <location>
        <begin position="126"/>
        <end position="128"/>
    </location>
</feature>
<feature type="helix" evidence="5">
    <location>
        <begin position="133"/>
        <end position="140"/>
    </location>
</feature>
<feature type="helix" evidence="5">
    <location>
        <begin position="147"/>
        <end position="149"/>
    </location>
</feature>
<feature type="strand" evidence="5">
    <location>
        <begin position="151"/>
        <end position="156"/>
    </location>
</feature>
<feature type="strand" evidence="5">
    <location>
        <begin position="159"/>
        <end position="161"/>
    </location>
</feature>
<feature type="turn" evidence="5">
    <location>
        <begin position="166"/>
        <end position="168"/>
    </location>
</feature>
<feature type="turn" evidence="5">
    <location>
        <begin position="171"/>
        <end position="173"/>
    </location>
</feature>
<feature type="strand" evidence="5">
    <location>
        <begin position="176"/>
        <end position="187"/>
    </location>
</feature>
<feature type="helix" evidence="5">
    <location>
        <begin position="189"/>
        <end position="191"/>
    </location>
</feature>
<feature type="helix" evidence="5">
    <location>
        <begin position="192"/>
        <end position="207"/>
    </location>
</feature>
<feature type="turn" evidence="5">
    <location>
        <begin position="208"/>
        <end position="210"/>
    </location>
</feature>
<feature type="strand" evidence="5">
    <location>
        <begin position="225"/>
        <end position="229"/>
    </location>
</feature>
<feature type="helix" evidence="5">
    <location>
        <begin position="239"/>
        <end position="256"/>
    </location>
</feature>
<feature type="strand" evidence="5">
    <location>
        <begin position="260"/>
        <end position="263"/>
    </location>
</feature>
<feature type="strand" evidence="5">
    <location>
        <begin position="273"/>
        <end position="279"/>
    </location>
</feature>
<feature type="strand" evidence="5">
    <location>
        <begin position="285"/>
        <end position="295"/>
    </location>
</feature>
<feature type="helix" evidence="5">
    <location>
        <begin position="296"/>
        <end position="300"/>
    </location>
</feature>
<feature type="strand" evidence="5">
    <location>
        <begin position="316"/>
        <end position="325"/>
    </location>
</feature>
<feature type="helix" evidence="5">
    <location>
        <begin position="326"/>
        <end position="337"/>
    </location>
</feature>
<feature type="helix" evidence="5">
    <location>
        <begin position="343"/>
        <end position="345"/>
    </location>
</feature>
<feature type="strand" evidence="5">
    <location>
        <begin position="350"/>
        <end position="356"/>
    </location>
</feature>
<feature type="helix" evidence="5">
    <location>
        <begin position="360"/>
        <end position="374"/>
    </location>
</feature>
<feature type="strand" evidence="6">
    <location>
        <begin position="379"/>
        <end position="381"/>
    </location>
</feature>
<feature type="strand" evidence="5">
    <location>
        <begin position="394"/>
        <end position="396"/>
    </location>
</feature>
<feature type="helix" evidence="5">
    <location>
        <begin position="403"/>
        <end position="413"/>
    </location>
</feature>
<feature type="strand" evidence="5">
    <location>
        <begin position="416"/>
        <end position="421"/>
    </location>
</feature>
<feature type="helix" evidence="5">
    <location>
        <begin position="423"/>
        <end position="428"/>
    </location>
</feature>
<feature type="strand" evidence="5">
    <location>
        <begin position="431"/>
        <end position="435"/>
    </location>
</feature>
<feature type="helix" evidence="5">
    <location>
        <begin position="436"/>
        <end position="438"/>
    </location>
</feature>
<feature type="strand" evidence="5">
    <location>
        <begin position="443"/>
        <end position="445"/>
    </location>
</feature>
<feature type="helix" evidence="5">
    <location>
        <begin position="447"/>
        <end position="459"/>
    </location>
</feature>
<proteinExistence type="evidence at protein level"/>
<gene>
    <name type="primary">MST1</name>
    <name type="ordered locus">YKL194C</name>
</gene>
<accession>P07236</accession>
<accession>D6VX06</accession>
<dbReference type="EC" id="6.1.1.3"/>
<dbReference type="EMBL" id="M12087">
    <property type="protein sequence ID" value="AAA34808.1"/>
    <property type="molecule type" value="mRNA"/>
</dbReference>
<dbReference type="EMBL" id="Z28194">
    <property type="protein sequence ID" value="CAA82038.1"/>
    <property type="molecule type" value="Genomic_DNA"/>
</dbReference>
<dbReference type="EMBL" id="X83609">
    <property type="protein sequence ID" value="CAA58589.1"/>
    <property type="molecule type" value="Genomic_DNA"/>
</dbReference>
<dbReference type="EMBL" id="BK006944">
    <property type="protein sequence ID" value="DAA08972.1"/>
    <property type="molecule type" value="Genomic_DNA"/>
</dbReference>
<dbReference type="PIR" id="S38031">
    <property type="entry name" value="YSBYTM"/>
</dbReference>
<dbReference type="RefSeq" id="NP_012727.1">
    <property type="nucleotide sequence ID" value="NM_001179760.1"/>
</dbReference>
<dbReference type="PDB" id="3UGQ">
    <property type="method" value="X-ray"/>
    <property type="resolution" value="2.10 A"/>
    <property type="chains" value="A=26-462"/>
</dbReference>
<dbReference type="PDB" id="3UGT">
    <property type="method" value="X-ray"/>
    <property type="resolution" value="3.60 A"/>
    <property type="chains" value="A/B/C/D=26-462"/>
</dbReference>
<dbReference type="PDB" id="3UH0">
    <property type="method" value="X-ray"/>
    <property type="resolution" value="2.00 A"/>
    <property type="chains" value="A=26-462"/>
</dbReference>
<dbReference type="PDB" id="4EO4">
    <property type="method" value="X-ray"/>
    <property type="resolution" value="2.87 A"/>
    <property type="chains" value="A/B/C/D=26-462"/>
</dbReference>
<dbReference type="PDB" id="4YYE">
    <property type="method" value="X-ray"/>
    <property type="resolution" value="2.30 A"/>
    <property type="chains" value="A/B=26-462"/>
</dbReference>
<dbReference type="PDBsum" id="3UGQ"/>
<dbReference type="PDBsum" id="3UGT"/>
<dbReference type="PDBsum" id="3UH0"/>
<dbReference type="PDBsum" id="4EO4"/>
<dbReference type="PDBsum" id="4YYE"/>
<dbReference type="SMR" id="P07236"/>
<dbReference type="BioGRID" id="33927">
    <property type="interactions" value="36"/>
</dbReference>
<dbReference type="DIP" id="DIP-4855N"/>
<dbReference type="FunCoup" id="P07236">
    <property type="interactions" value="110"/>
</dbReference>
<dbReference type="IntAct" id="P07236">
    <property type="interactions" value="2"/>
</dbReference>
<dbReference type="MINT" id="P07236"/>
<dbReference type="STRING" id="4932.YKL194C"/>
<dbReference type="GlyGen" id="P07236">
    <property type="glycosylation" value="1 site"/>
</dbReference>
<dbReference type="PaxDb" id="4932-YKL194C"/>
<dbReference type="PeptideAtlas" id="P07236"/>
<dbReference type="EnsemblFungi" id="YKL194C_mRNA">
    <property type="protein sequence ID" value="YKL194C"/>
    <property type="gene ID" value="YKL194C"/>
</dbReference>
<dbReference type="GeneID" id="853640"/>
<dbReference type="KEGG" id="sce:YKL194C"/>
<dbReference type="AGR" id="SGD:S000001677"/>
<dbReference type="SGD" id="S000001677">
    <property type="gene designation" value="MST1"/>
</dbReference>
<dbReference type="VEuPathDB" id="FungiDB:YKL194C"/>
<dbReference type="eggNOG" id="KOG1637">
    <property type="taxonomic scope" value="Eukaryota"/>
</dbReference>
<dbReference type="HOGENOM" id="CLU_008554_2_1_1"/>
<dbReference type="InParanoid" id="P07236"/>
<dbReference type="OMA" id="HRYEYSG"/>
<dbReference type="OrthoDB" id="5423599at2759"/>
<dbReference type="BioCyc" id="YEAST:G3O-31956-MONOMER"/>
<dbReference type="BRENDA" id="6.1.1.3">
    <property type="organism ID" value="984"/>
</dbReference>
<dbReference type="BioGRID-ORCS" id="853640">
    <property type="hits" value="4 hits in 10 CRISPR screens"/>
</dbReference>
<dbReference type="EvolutionaryTrace" id="P07236"/>
<dbReference type="PRO" id="PR:P07236"/>
<dbReference type="Proteomes" id="UP000002311">
    <property type="component" value="Chromosome XI"/>
</dbReference>
<dbReference type="RNAct" id="P07236">
    <property type="molecule type" value="protein"/>
</dbReference>
<dbReference type="GO" id="GO:0005759">
    <property type="term" value="C:mitochondrial matrix"/>
    <property type="evidence" value="ECO:0007669"/>
    <property type="project" value="UniProtKB-SubCell"/>
</dbReference>
<dbReference type="GO" id="GO:0005739">
    <property type="term" value="C:mitochondrion"/>
    <property type="evidence" value="ECO:0000314"/>
    <property type="project" value="SGD"/>
</dbReference>
<dbReference type="GO" id="GO:0005524">
    <property type="term" value="F:ATP binding"/>
    <property type="evidence" value="ECO:0007669"/>
    <property type="project" value="UniProtKB-KW"/>
</dbReference>
<dbReference type="GO" id="GO:0004829">
    <property type="term" value="F:threonine-tRNA ligase activity"/>
    <property type="evidence" value="ECO:0000314"/>
    <property type="project" value="SGD"/>
</dbReference>
<dbReference type="GO" id="GO:0070159">
    <property type="term" value="P:mitochondrial threonyl-tRNA aminoacylation"/>
    <property type="evidence" value="ECO:0000314"/>
    <property type="project" value="SGD"/>
</dbReference>
<dbReference type="CDD" id="cd00860">
    <property type="entry name" value="ThrRS_anticodon"/>
    <property type="match status" value="1"/>
</dbReference>
<dbReference type="CDD" id="cd00771">
    <property type="entry name" value="ThrRS_core"/>
    <property type="match status" value="1"/>
</dbReference>
<dbReference type="FunFam" id="3.30.930.10:FF:000039">
    <property type="entry name" value="Threonyl-tRNA synthetase, mitochondrial"/>
    <property type="match status" value="1"/>
</dbReference>
<dbReference type="Gene3D" id="3.40.50.800">
    <property type="entry name" value="Anticodon-binding domain"/>
    <property type="match status" value="1"/>
</dbReference>
<dbReference type="Gene3D" id="3.30.930.10">
    <property type="entry name" value="Bira Bifunctional Protein, Domain 2"/>
    <property type="match status" value="1"/>
</dbReference>
<dbReference type="InterPro" id="IPR002314">
    <property type="entry name" value="aa-tRNA-synt_IIb"/>
</dbReference>
<dbReference type="InterPro" id="IPR006195">
    <property type="entry name" value="aa-tRNA-synth_II"/>
</dbReference>
<dbReference type="InterPro" id="IPR045864">
    <property type="entry name" value="aa-tRNA-synth_II/BPL/LPL"/>
</dbReference>
<dbReference type="InterPro" id="IPR004154">
    <property type="entry name" value="Anticodon-bd"/>
</dbReference>
<dbReference type="InterPro" id="IPR036621">
    <property type="entry name" value="Anticodon-bd_dom_sf"/>
</dbReference>
<dbReference type="InterPro" id="IPR002320">
    <property type="entry name" value="Thr-tRNA-ligase_IIa"/>
</dbReference>
<dbReference type="InterPro" id="IPR047246">
    <property type="entry name" value="ThrRS_anticodon"/>
</dbReference>
<dbReference type="InterPro" id="IPR033728">
    <property type="entry name" value="ThrRS_core"/>
</dbReference>
<dbReference type="NCBIfam" id="TIGR00418">
    <property type="entry name" value="thrS"/>
    <property type="match status" value="1"/>
</dbReference>
<dbReference type="PANTHER" id="PTHR11451:SF50">
    <property type="entry name" value="THREONINE--TRNA LIGASE, MITOCHONDRIAL"/>
    <property type="match status" value="1"/>
</dbReference>
<dbReference type="PANTHER" id="PTHR11451">
    <property type="entry name" value="THREONINE-TRNA LIGASE"/>
    <property type="match status" value="1"/>
</dbReference>
<dbReference type="Pfam" id="PF03129">
    <property type="entry name" value="HGTP_anticodon"/>
    <property type="match status" value="1"/>
</dbReference>
<dbReference type="Pfam" id="PF00587">
    <property type="entry name" value="tRNA-synt_2b"/>
    <property type="match status" value="1"/>
</dbReference>
<dbReference type="PRINTS" id="PR01047">
    <property type="entry name" value="TRNASYNTHTHR"/>
</dbReference>
<dbReference type="SUPFAM" id="SSF52954">
    <property type="entry name" value="Class II aaRS ABD-related"/>
    <property type="match status" value="1"/>
</dbReference>
<dbReference type="SUPFAM" id="SSF55681">
    <property type="entry name" value="Class II aaRS and biotin synthetases"/>
    <property type="match status" value="1"/>
</dbReference>
<dbReference type="PROSITE" id="PS50862">
    <property type="entry name" value="AA_TRNA_LIGASE_II"/>
    <property type="match status" value="1"/>
</dbReference>
<sequence>MKIQLVRWHCSRNALWNRAFYSTRKATKNASSATPATMTSMVSQRQDLFMTDPLSPGSMFFLPNGAKIFNKLIEFMKLQQKFKFGFNEVVTPLIYKKTLWEKSGHWENYADDMFKVETTDEEKEEYGLKPMNCPGHCLIFGKKDRSYNELPLRFSDFSPLHRNEASGALSGLTRLRKFHQDDGHIFCTPSQVKSEIFNSLKLIDIVYNKIFPFVKGGSGAESNYFINFSTRPDHFIGDLKVWNHAEQVLKEILEESGKPWKLNPGDGAFYGPKLDIMVTDHLRKTHQVATIQLDFQLPERFDLKFKDQDNSYKRPIMIHRATFGSIERFMALLIDSNEGRWPFWLNPYQAVIIPVNTKNVQQLDMCTALQKKLRNELEADDMEPVPLNDWHFNVDLDIRNEPVGYRIKSAILKNYSYLIIVGDEEVQLQKYNIRERDNRKSFEKLTMSQIWEKFIELEKNYK</sequence>
<evidence type="ECO:0000255" key="1"/>
<evidence type="ECO:0000269" key="2">
    <source>
    </source>
</evidence>
<evidence type="ECO:0000305" key="3"/>
<evidence type="ECO:0007829" key="4">
    <source>
        <dbReference type="PDB" id="3UGQ"/>
    </source>
</evidence>
<evidence type="ECO:0007829" key="5">
    <source>
        <dbReference type="PDB" id="3UH0"/>
    </source>
</evidence>
<evidence type="ECO:0007829" key="6">
    <source>
        <dbReference type="PDB" id="4EO4"/>
    </source>
</evidence>
<keyword id="KW-0002">3D-structure</keyword>
<keyword id="KW-0030">Aminoacyl-tRNA synthetase</keyword>
<keyword id="KW-0067">ATP-binding</keyword>
<keyword id="KW-0436">Ligase</keyword>
<keyword id="KW-0496">Mitochondrion</keyword>
<keyword id="KW-0547">Nucleotide-binding</keyword>
<keyword id="KW-0648">Protein biosynthesis</keyword>
<keyword id="KW-1185">Reference proteome</keyword>
<keyword id="KW-0809">Transit peptide</keyword>
<reference key="1">
    <citation type="journal article" date="1985" name="J. Biol. Chem.">
        <title>Characterization of a yeast nuclear gene (MST1) coding for the mitochondrial threonyl-tRNA1 synthetase.</title>
        <authorList>
            <person name="Pape L.K."/>
            <person name="Koerner T.J."/>
            <person name="Tzagoloff A."/>
        </authorList>
    </citation>
    <scope>NUCLEOTIDE SEQUENCE [MRNA]</scope>
</reference>
<reference key="2">
    <citation type="journal article" date="1994" name="Nature">
        <title>Complete DNA sequence of yeast chromosome XI.</title>
        <authorList>
            <person name="Dujon B."/>
            <person name="Alexandraki D."/>
            <person name="Andre B."/>
            <person name="Ansorge W."/>
            <person name="Baladron V."/>
            <person name="Ballesta J.P.G."/>
            <person name="Banrevi A."/>
            <person name="Bolle P.-A."/>
            <person name="Bolotin-Fukuhara M."/>
            <person name="Bossier P."/>
            <person name="Bou G."/>
            <person name="Boyer J."/>
            <person name="Buitrago M.J."/>
            <person name="Cheret G."/>
            <person name="Colleaux L."/>
            <person name="Daignan-Fornier B."/>
            <person name="del Rey F."/>
            <person name="Dion C."/>
            <person name="Domdey H."/>
            <person name="Duesterhoeft A."/>
            <person name="Duesterhus S."/>
            <person name="Entian K.-D."/>
            <person name="Erfle H."/>
            <person name="Esteban P.F."/>
            <person name="Feldmann H."/>
            <person name="Fernandes L."/>
            <person name="Fobo G.M."/>
            <person name="Fritz C."/>
            <person name="Fukuhara H."/>
            <person name="Gabel C."/>
            <person name="Gaillon L."/>
            <person name="Garcia-Cantalejo J.M."/>
            <person name="Garcia-Ramirez J.J."/>
            <person name="Gent M.E."/>
            <person name="Ghazvini M."/>
            <person name="Goffeau A."/>
            <person name="Gonzalez A."/>
            <person name="Grothues D."/>
            <person name="Guerreiro P."/>
            <person name="Hegemann J.H."/>
            <person name="Hewitt N."/>
            <person name="Hilger F."/>
            <person name="Hollenberg C.P."/>
            <person name="Horaitis O."/>
            <person name="Indge K.J."/>
            <person name="Jacquier A."/>
            <person name="James C.M."/>
            <person name="Jauniaux J.-C."/>
            <person name="Jimenez A."/>
            <person name="Keuchel H."/>
            <person name="Kirchrath L."/>
            <person name="Kleine K."/>
            <person name="Koetter P."/>
            <person name="Legrain P."/>
            <person name="Liebl S."/>
            <person name="Louis E.J."/>
            <person name="Maia e Silva A."/>
            <person name="Marck C."/>
            <person name="Monnier A.-L."/>
            <person name="Moestl D."/>
            <person name="Mueller S."/>
            <person name="Obermaier B."/>
            <person name="Oliver S.G."/>
            <person name="Pallier C."/>
            <person name="Pascolo S."/>
            <person name="Pfeiffer F."/>
            <person name="Philippsen P."/>
            <person name="Planta R.J."/>
            <person name="Pohl F.M."/>
            <person name="Pohl T.M."/>
            <person name="Poehlmann R."/>
            <person name="Portetelle D."/>
            <person name="Purnelle B."/>
            <person name="Puzos V."/>
            <person name="Ramezani Rad M."/>
            <person name="Rasmussen S.W."/>
            <person name="Remacha M.A."/>
            <person name="Revuelta J.L."/>
            <person name="Richard G.-F."/>
            <person name="Rieger M."/>
            <person name="Rodrigues-Pousada C."/>
            <person name="Rose M."/>
            <person name="Rupp T."/>
            <person name="Santos M.A."/>
            <person name="Schwager C."/>
            <person name="Sensen C."/>
            <person name="Skala J."/>
            <person name="Soares H."/>
            <person name="Sor F."/>
            <person name="Stegemann J."/>
            <person name="Tettelin H."/>
            <person name="Thierry A."/>
            <person name="Tzermia M."/>
            <person name="Urrestarazu L.A."/>
            <person name="van Dyck L."/>
            <person name="van Vliet-Reedijk J.C."/>
            <person name="Valens M."/>
            <person name="Vandenbol M."/>
            <person name="Vilela C."/>
            <person name="Vissers S."/>
            <person name="von Wettstein D."/>
            <person name="Voss H."/>
            <person name="Wiemann S."/>
            <person name="Xu G."/>
            <person name="Zimmermann J."/>
            <person name="Haasemann M."/>
            <person name="Becker I."/>
            <person name="Mewes H.-W."/>
        </authorList>
    </citation>
    <scope>NUCLEOTIDE SEQUENCE [LARGE SCALE GENOMIC DNA]</scope>
    <source>
        <strain>ATCC 204508 / S288c</strain>
    </source>
</reference>
<reference key="3">
    <citation type="journal article" date="2014" name="G3 (Bethesda)">
        <title>The reference genome sequence of Saccharomyces cerevisiae: Then and now.</title>
        <authorList>
            <person name="Engel S.R."/>
            <person name="Dietrich F.S."/>
            <person name="Fisk D.G."/>
            <person name="Binkley G."/>
            <person name="Balakrishnan R."/>
            <person name="Costanzo M.C."/>
            <person name="Dwight S.S."/>
            <person name="Hitz B.C."/>
            <person name="Karra K."/>
            <person name="Nash R.S."/>
            <person name="Weng S."/>
            <person name="Wong E.D."/>
            <person name="Lloyd P."/>
            <person name="Skrzypek M.S."/>
            <person name="Miyasato S.R."/>
            <person name="Simison M."/>
            <person name="Cherry J.M."/>
        </authorList>
    </citation>
    <scope>GENOME REANNOTATION</scope>
    <source>
        <strain>ATCC 204508 / S288c</strain>
    </source>
</reference>
<reference key="4">
    <citation type="journal article" date="1995" name="Mol. Cell. Biol.">
        <title>The Saccharomyces cerevisiae gene SDS22 encodes a potential regulator of the mitotic function of yeast type 1 protein phosphatase.</title>
        <authorList>
            <person name="Mackelvie S.H."/>
            <person name="Andrews P.D."/>
            <person name="Stark M.J.R."/>
        </authorList>
    </citation>
    <scope>NUCLEOTIDE SEQUENCE [GENOMIC DNA] OF 1-14</scope>
    <source>
        <strain>ATCC 200358 / YNN 295</strain>
    </source>
</reference>
<reference key="5">
    <citation type="journal article" date="2003" name="Nature">
        <title>Global analysis of protein expression in yeast.</title>
        <authorList>
            <person name="Ghaemmaghami S."/>
            <person name="Huh W.-K."/>
            <person name="Bower K."/>
            <person name="Howson R.W."/>
            <person name="Belle A."/>
            <person name="Dephoure N."/>
            <person name="O'Shea E.K."/>
            <person name="Weissman J.S."/>
        </authorList>
    </citation>
    <scope>LEVEL OF PROTEIN EXPRESSION [LARGE SCALE ANALYSIS]</scope>
</reference>
<comment type="catalytic activity">
    <reaction>
        <text>tRNA(Thr) + L-threonine + ATP = L-threonyl-tRNA(Thr) + AMP + diphosphate + H(+)</text>
        <dbReference type="Rhea" id="RHEA:24624"/>
        <dbReference type="Rhea" id="RHEA-COMP:9670"/>
        <dbReference type="Rhea" id="RHEA-COMP:9704"/>
        <dbReference type="ChEBI" id="CHEBI:15378"/>
        <dbReference type="ChEBI" id="CHEBI:30616"/>
        <dbReference type="ChEBI" id="CHEBI:33019"/>
        <dbReference type="ChEBI" id="CHEBI:57926"/>
        <dbReference type="ChEBI" id="CHEBI:78442"/>
        <dbReference type="ChEBI" id="CHEBI:78534"/>
        <dbReference type="ChEBI" id="CHEBI:456215"/>
        <dbReference type="EC" id="6.1.1.3"/>
    </reaction>
</comment>
<comment type="subcellular location">
    <subcellularLocation>
        <location>Mitochondrion matrix</location>
    </subcellularLocation>
</comment>
<comment type="miscellaneous">
    <text evidence="2">Present with 1240 molecules/cell in log phase SD medium.</text>
</comment>
<comment type="similarity">
    <text evidence="3">Belongs to the class-II aminoacyl-tRNA synthetase family.</text>
</comment>